<protein>
    <recommendedName>
        <fullName evidence="1">Putative membrane protein insertion efficiency factor</fullName>
    </recommendedName>
</protein>
<dbReference type="EMBL" id="AP008971">
    <property type="protein sequence ID" value="BAG09045.1"/>
    <property type="molecule type" value="Genomic_DNA"/>
</dbReference>
<dbReference type="STRING" id="334413.FMG_1627"/>
<dbReference type="KEGG" id="fma:FMG_1627"/>
<dbReference type="eggNOG" id="COG0759">
    <property type="taxonomic scope" value="Bacteria"/>
</dbReference>
<dbReference type="HOGENOM" id="CLU_144811_6_0_9"/>
<dbReference type="Proteomes" id="UP000001319">
    <property type="component" value="Chromosome"/>
</dbReference>
<dbReference type="GO" id="GO:0005886">
    <property type="term" value="C:plasma membrane"/>
    <property type="evidence" value="ECO:0007669"/>
    <property type="project" value="UniProtKB-SubCell"/>
</dbReference>
<dbReference type="HAMAP" id="MF_00386">
    <property type="entry name" value="UPF0161_YidD"/>
    <property type="match status" value="1"/>
</dbReference>
<dbReference type="InterPro" id="IPR002696">
    <property type="entry name" value="Membr_insert_effic_factor_YidD"/>
</dbReference>
<dbReference type="NCBIfam" id="TIGR00278">
    <property type="entry name" value="membrane protein insertion efficiency factor YidD"/>
    <property type="match status" value="1"/>
</dbReference>
<dbReference type="PANTHER" id="PTHR33383">
    <property type="entry name" value="MEMBRANE PROTEIN INSERTION EFFICIENCY FACTOR-RELATED"/>
    <property type="match status" value="1"/>
</dbReference>
<dbReference type="PANTHER" id="PTHR33383:SF1">
    <property type="entry name" value="MEMBRANE PROTEIN INSERTION EFFICIENCY FACTOR-RELATED"/>
    <property type="match status" value="1"/>
</dbReference>
<dbReference type="Pfam" id="PF01809">
    <property type="entry name" value="YidD"/>
    <property type="match status" value="1"/>
</dbReference>
<dbReference type="SMART" id="SM01234">
    <property type="entry name" value="Haemolytic"/>
    <property type="match status" value="1"/>
</dbReference>
<gene>
    <name type="ordered locus">FMG_1627</name>
</gene>
<name>YIDD_FINM2</name>
<keyword id="KW-1003">Cell membrane</keyword>
<keyword id="KW-0472">Membrane</keyword>
<keyword id="KW-1185">Reference proteome</keyword>
<reference key="1">
    <citation type="journal article" date="2008" name="DNA Res.">
        <title>Complete genome sequence of Finegoldia magna, an anaerobic opportunistic pathogen.</title>
        <authorList>
            <person name="Goto T."/>
            <person name="Yamashita A."/>
            <person name="Hirakawa H."/>
            <person name="Matsutani M."/>
            <person name="Todo K."/>
            <person name="Ohshima K."/>
            <person name="Toh H."/>
            <person name="Miyamoto K."/>
            <person name="Kuhara S."/>
            <person name="Hattori M."/>
            <person name="Shimizu T."/>
            <person name="Akimoto S."/>
        </authorList>
    </citation>
    <scope>NUCLEOTIDE SEQUENCE [LARGE SCALE GENOMIC DNA]</scope>
    <source>
        <strain>ATCC 29328 / DSM 20472 / WAL 2508</strain>
    </source>
</reference>
<accession>B0S3V5</accession>
<organism>
    <name type="scientific">Finegoldia magna (strain ATCC 29328 / DSM 20472 / WAL 2508)</name>
    <name type="common">Peptostreptococcus magnus</name>
    <dbReference type="NCBI Taxonomy" id="334413"/>
    <lineage>
        <taxon>Bacteria</taxon>
        <taxon>Bacillati</taxon>
        <taxon>Bacillota</taxon>
        <taxon>Tissierellia</taxon>
        <taxon>Tissierellales</taxon>
        <taxon>Peptoniphilaceae</taxon>
        <taxon>Finegoldia</taxon>
    </lineage>
</organism>
<feature type="chain" id="PRO_1000122644" description="Putative membrane protein insertion efficiency factor">
    <location>
        <begin position="1"/>
        <end position="70"/>
    </location>
</feature>
<sequence>MSKVMIFLIKFYQKAISPYLGQGKCKYYPTCSQYALEAFKKKPFFKALGLTIWRILRCNPFSKGGYDPLK</sequence>
<proteinExistence type="inferred from homology"/>
<comment type="function">
    <text evidence="1">Could be involved in insertion of integral membrane proteins into the membrane.</text>
</comment>
<comment type="subcellular location">
    <subcellularLocation>
        <location evidence="1">Cell membrane</location>
        <topology evidence="1">Peripheral membrane protein</topology>
        <orientation evidence="1">Cytoplasmic side</orientation>
    </subcellularLocation>
</comment>
<comment type="similarity">
    <text evidence="1">Belongs to the UPF0161 family.</text>
</comment>
<evidence type="ECO:0000255" key="1">
    <source>
        <dbReference type="HAMAP-Rule" id="MF_00386"/>
    </source>
</evidence>